<protein>
    <recommendedName>
        <fullName evidence="1">tRNA N6-adenosine threonylcarbamoyltransferase</fullName>
        <ecNumber evidence="1">2.3.1.234</ecNumber>
    </recommendedName>
    <alternativeName>
        <fullName evidence="1">N6-L-threonylcarbamoyladenine synthase</fullName>
        <shortName evidence="1">t(6)A synthase</shortName>
    </alternativeName>
    <alternativeName>
        <fullName evidence="1">t(6)A37 threonylcarbamoyladenosine biosynthesis protein TsaD</fullName>
    </alternativeName>
    <alternativeName>
        <fullName evidence="1">tRNA threonylcarbamoyladenosine biosynthesis protein TsaD</fullName>
    </alternativeName>
</protein>
<feature type="chain" id="PRO_0000303494" description="tRNA N6-adenosine threonylcarbamoyltransferase">
    <location>
        <begin position="1"/>
        <end position="341"/>
    </location>
</feature>
<feature type="binding site" evidence="1">
    <location>
        <position position="111"/>
    </location>
    <ligand>
        <name>Fe cation</name>
        <dbReference type="ChEBI" id="CHEBI:24875"/>
    </ligand>
</feature>
<feature type="binding site" evidence="1">
    <location>
        <position position="115"/>
    </location>
    <ligand>
        <name>Fe cation</name>
        <dbReference type="ChEBI" id="CHEBI:24875"/>
    </ligand>
</feature>
<feature type="binding site" evidence="1">
    <location>
        <begin position="134"/>
        <end position="138"/>
    </location>
    <ligand>
        <name>substrate</name>
    </ligand>
</feature>
<feature type="binding site" evidence="1">
    <location>
        <position position="167"/>
    </location>
    <ligand>
        <name>substrate</name>
    </ligand>
</feature>
<feature type="binding site" evidence="1">
    <location>
        <position position="180"/>
    </location>
    <ligand>
        <name>substrate</name>
    </ligand>
</feature>
<feature type="binding site" evidence="1">
    <location>
        <position position="276"/>
    </location>
    <ligand>
        <name>substrate</name>
    </ligand>
</feature>
<feature type="binding site" evidence="1">
    <location>
        <position position="304"/>
    </location>
    <ligand>
        <name>Fe cation</name>
        <dbReference type="ChEBI" id="CHEBI:24875"/>
    </ligand>
</feature>
<sequence length="341" mass="36425">MLVLGLETSCDETGVALYDSERGLLADALFSQIDLHRVYGGVVPELASRDHVKRMLPLIRQVLAEADCVPTEIDAIAYTAGPGLVGALLVGASCAQALAFAWGIPALGVHHMEGHLLAPMLEPKPPEFPFVALLVSGGHTQLVQVDGIGQYSLLGETLDDAAGEAFDKTAKMMGLNYPGGPEIAKLAEKGVAGRFTFPRPMCDRPGLDFSFSGLKTFALNTWQQCVSAGDDSEQARCDIALAFQQAVVETLTIKCKRALKQAGMKRLVIAGGVSANRALRVSLEKMLGDMKGDVFYARPEFCTDNGAMIAFAGCQRLQAGQQESLAISVQARWPMEQLSAL</sequence>
<evidence type="ECO:0000255" key="1">
    <source>
        <dbReference type="HAMAP-Rule" id="MF_01445"/>
    </source>
</evidence>
<dbReference type="EC" id="2.3.1.234" evidence="1"/>
<dbReference type="EMBL" id="CP000094">
    <property type="protein sequence ID" value="ABA76883.1"/>
    <property type="molecule type" value="Genomic_DNA"/>
</dbReference>
<dbReference type="RefSeq" id="WP_011336217.1">
    <property type="nucleotide sequence ID" value="NC_007492.2"/>
</dbReference>
<dbReference type="SMR" id="Q3K5S1"/>
<dbReference type="KEGG" id="pfo:Pfl01_5146"/>
<dbReference type="eggNOG" id="COG0533">
    <property type="taxonomic scope" value="Bacteria"/>
</dbReference>
<dbReference type="HOGENOM" id="CLU_023208_0_2_6"/>
<dbReference type="Proteomes" id="UP000002704">
    <property type="component" value="Chromosome"/>
</dbReference>
<dbReference type="GO" id="GO:0005737">
    <property type="term" value="C:cytoplasm"/>
    <property type="evidence" value="ECO:0007669"/>
    <property type="project" value="UniProtKB-SubCell"/>
</dbReference>
<dbReference type="GO" id="GO:0005506">
    <property type="term" value="F:iron ion binding"/>
    <property type="evidence" value="ECO:0007669"/>
    <property type="project" value="UniProtKB-UniRule"/>
</dbReference>
<dbReference type="GO" id="GO:0061711">
    <property type="term" value="F:N(6)-L-threonylcarbamoyladenine synthase activity"/>
    <property type="evidence" value="ECO:0007669"/>
    <property type="project" value="UniProtKB-EC"/>
</dbReference>
<dbReference type="GO" id="GO:0002949">
    <property type="term" value="P:tRNA threonylcarbamoyladenosine modification"/>
    <property type="evidence" value="ECO:0007669"/>
    <property type="project" value="UniProtKB-UniRule"/>
</dbReference>
<dbReference type="CDD" id="cd24133">
    <property type="entry name" value="ASKHA_NBD_TsaD_bac"/>
    <property type="match status" value="1"/>
</dbReference>
<dbReference type="FunFam" id="3.30.420.40:FF:000012">
    <property type="entry name" value="tRNA N6-adenosine threonylcarbamoyltransferase"/>
    <property type="match status" value="1"/>
</dbReference>
<dbReference type="FunFam" id="3.30.420.40:FF:000031">
    <property type="entry name" value="tRNA N6-adenosine threonylcarbamoyltransferase"/>
    <property type="match status" value="1"/>
</dbReference>
<dbReference type="Gene3D" id="3.30.420.40">
    <property type="match status" value="2"/>
</dbReference>
<dbReference type="HAMAP" id="MF_01445">
    <property type="entry name" value="TsaD"/>
    <property type="match status" value="1"/>
</dbReference>
<dbReference type="InterPro" id="IPR043129">
    <property type="entry name" value="ATPase_NBD"/>
</dbReference>
<dbReference type="InterPro" id="IPR000905">
    <property type="entry name" value="Gcp-like_dom"/>
</dbReference>
<dbReference type="InterPro" id="IPR017861">
    <property type="entry name" value="KAE1/TsaD"/>
</dbReference>
<dbReference type="InterPro" id="IPR022450">
    <property type="entry name" value="TsaD"/>
</dbReference>
<dbReference type="NCBIfam" id="TIGR00329">
    <property type="entry name" value="gcp_kae1"/>
    <property type="match status" value="1"/>
</dbReference>
<dbReference type="NCBIfam" id="TIGR03723">
    <property type="entry name" value="T6A_TsaD_YgjD"/>
    <property type="match status" value="1"/>
</dbReference>
<dbReference type="PANTHER" id="PTHR11735">
    <property type="entry name" value="TRNA N6-ADENOSINE THREONYLCARBAMOYLTRANSFERASE"/>
    <property type="match status" value="1"/>
</dbReference>
<dbReference type="PANTHER" id="PTHR11735:SF6">
    <property type="entry name" value="TRNA N6-ADENOSINE THREONYLCARBAMOYLTRANSFERASE, MITOCHONDRIAL"/>
    <property type="match status" value="1"/>
</dbReference>
<dbReference type="Pfam" id="PF00814">
    <property type="entry name" value="TsaD"/>
    <property type="match status" value="1"/>
</dbReference>
<dbReference type="PRINTS" id="PR00789">
    <property type="entry name" value="OSIALOPTASE"/>
</dbReference>
<dbReference type="SUPFAM" id="SSF53067">
    <property type="entry name" value="Actin-like ATPase domain"/>
    <property type="match status" value="2"/>
</dbReference>
<gene>
    <name evidence="1" type="primary">tsaD</name>
    <name type="synonym">gcp</name>
    <name type="ordered locus">Pfl01_5146</name>
</gene>
<proteinExistence type="inferred from homology"/>
<reference key="1">
    <citation type="journal article" date="2009" name="Genome Biol.">
        <title>Genomic and genetic analyses of diversity and plant interactions of Pseudomonas fluorescens.</title>
        <authorList>
            <person name="Silby M.W."/>
            <person name="Cerdeno-Tarraga A.M."/>
            <person name="Vernikos G.S."/>
            <person name="Giddens S.R."/>
            <person name="Jackson R.W."/>
            <person name="Preston G.M."/>
            <person name="Zhang X.-X."/>
            <person name="Moon C.D."/>
            <person name="Gehrig S.M."/>
            <person name="Godfrey S.A.C."/>
            <person name="Knight C.G."/>
            <person name="Malone J.G."/>
            <person name="Robinson Z."/>
            <person name="Spiers A.J."/>
            <person name="Harris S."/>
            <person name="Challis G.L."/>
            <person name="Yaxley A.M."/>
            <person name="Harris D."/>
            <person name="Seeger K."/>
            <person name="Murphy L."/>
            <person name="Rutter S."/>
            <person name="Squares R."/>
            <person name="Quail M.A."/>
            <person name="Saunders E."/>
            <person name="Mavromatis K."/>
            <person name="Brettin T.S."/>
            <person name="Bentley S.D."/>
            <person name="Hothersall J."/>
            <person name="Stephens E."/>
            <person name="Thomas C.M."/>
            <person name="Parkhill J."/>
            <person name="Levy S.B."/>
            <person name="Rainey P.B."/>
            <person name="Thomson N.R."/>
        </authorList>
    </citation>
    <scope>NUCLEOTIDE SEQUENCE [LARGE SCALE GENOMIC DNA]</scope>
    <source>
        <strain>Pf0-1</strain>
    </source>
</reference>
<keyword id="KW-0012">Acyltransferase</keyword>
<keyword id="KW-0963">Cytoplasm</keyword>
<keyword id="KW-0408">Iron</keyword>
<keyword id="KW-0479">Metal-binding</keyword>
<keyword id="KW-0808">Transferase</keyword>
<keyword id="KW-0819">tRNA processing</keyword>
<comment type="function">
    <text evidence="1">Required for the formation of a threonylcarbamoyl group on adenosine at position 37 (t(6)A37) in tRNAs that read codons beginning with adenine. Is involved in the transfer of the threonylcarbamoyl moiety of threonylcarbamoyl-AMP (TC-AMP) to the N6 group of A37, together with TsaE and TsaB. TsaD likely plays a direct catalytic role in this reaction.</text>
</comment>
<comment type="catalytic activity">
    <reaction evidence="1">
        <text>L-threonylcarbamoyladenylate + adenosine(37) in tRNA = N(6)-L-threonylcarbamoyladenosine(37) in tRNA + AMP + H(+)</text>
        <dbReference type="Rhea" id="RHEA:37059"/>
        <dbReference type="Rhea" id="RHEA-COMP:10162"/>
        <dbReference type="Rhea" id="RHEA-COMP:10163"/>
        <dbReference type="ChEBI" id="CHEBI:15378"/>
        <dbReference type="ChEBI" id="CHEBI:73682"/>
        <dbReference type="ChEBI" id="CHEBI:74411"/>
        <dbReference type="ChEBI" id="CHEBI:74418"/>
        <dbReference type="ChEBI" id="CHEBI:456215"/>
        <dbReference type="EC" id="2.3.1.234"/>
    </reaction>
</comment>
<comment type="cofactor">
    <cofactor evidence="1">
        <name>Fe(2+)</name>
        <dbReference type="ChEBI" id="CHEBI:29033"/>
    </cofactor>
    <text evidence="1">Binds 1 Fe(2+) ion per subunit.</text>
</comment>
<comment type="subcellular location">
    <subcellularLocation>
        <location evidence="1">Cytoplasm</location>
    </subcellularLocation>
</comment>
<comment type="similarity">
    <text evidence="1">Belongs to the KAE1 / TsaD family.</text>
</comment>
<name>TSAD_PSEPF</name>
<accession>Q3K5S1</accession>
<organism>
    <name type="scientific">Pseudomonas fluorescens (strain Pf0-1)</name>
    <dbReference type="NCBI Taxonomy" id="205922"/>
    <lineage>
        <taxon>Bacteria</taxon>
        <taxon>Pseudomonadati</taxon>
        <taxon>Pseudomonadota</taxon>
        <taxon>Gammaproteobacteria</taxon>
        <taxon>Pseudomonadales</taxon>
        <taxon>Pseudomonadaceae</taxon>
        <taxon>Pseudomonas</taxon>
    </lineage>
</organism>